<evidence type="ECO:0000255" key="1">
    <source>
        <dbReference type="HAMAP-Rule" id="MF_03103"/>
    </source>
</evidence>
<evidence type="ECO:0000256" key="2">
    <source>
        <dbReference type="SAM" id="MobiDB-lite"/>
    </source>
</evidence>
<feature type="chain" id="PRO_0000384216" description="Maintenance of mitochondrial morphology protein 1">
    <location>
        <begin position="1"/>
        <end position="484"/>
    </location>
</feature>
<feature type="topological domain" description="Lumenal" evidence="1">
    <location>
        <begin position="1"/>
        <end position="22"/>
    </location>
</feature>
<feature type="transmembrane region" description="Helical" evidence="1">
    <location>
        <begin position="23"/>
        <end position="43"/>
    </location>
</feature>
<feature type="topological domain" description="Cytoplasmic" evidence="1">
    <location>
        <begin position="44"/>
        <end position="484"/>
    </location>
</feature>
<feature type="domain" description="SMP-LTD" evidence="1">
    <location>
        <begin position="130"/>
        <end position="380"/>
    </location>
</feature>
<feature type="region of interest" description="Disordered" evidence="2">
    <location>
        <begin position="50"/>
        <end position="98"/>
    </location>
</feature>
<feature type="region of interest" description="Disordered" evidence="2">
    <location>
        <begin position="272"/>
        <end position="319"/>
    </location>
</feature>
<feature type="region of interest" description="Disordered" evidence="2">
    <location>
        <begin position="388"/>
        <end position="484"/>
    </location>
</feature>
<feature type="compositionally biased region" description="Basic residues" evidence="2">
    <location>
        <begin position="54"/>
        <end position="64"/>
    </location>
</feature>
<feature type="compositionally biased region" description="Polar residues" evidence="2">
    <location>
        <begin position="65"/>
        <end position="78"/>
    </location>
</feature>
<feature type="compositionally biased region" description="Polar residues" evidence="2">
    <location>
        <begin position="85"/>
        <end position="98"/>
    </location>
</feature>
<feature type="compositionally biased region" description="Pro residues" evidence="2">
    <location>
        <begin position="272"/>
        <end position="286"/>
    </location>
</feature>
<feature type="compositionally biased region" description="Polar residues" evidence="2">
    <location>
        <begin position="399"/>
        <end position="408"/>
    </location>
</feature>
<feature type="compositionally biased region" description="Basic and acidic residues" evidence="2">
    <location>
        <begin position="413"/>
        <end position="427"/>
    </location>
</feature>
<feature type="compositionally biased region" description="Polar residues" evidence="2">
    <location>
        <begin position="437"/>
        <end position="449"/>
    </location>
</feature>
<feature type="compositionally biased region" description="Polar residues" evidence="2">
    <location>
        <begin position="466"/>
        <end position="476"/>
    </location>
</feature>
<sequence length="484" mass="52398">MSFQQSETVPVPAQSSLSFTQGFLLGQLSVVLLIGAFIKFFIFGEAPPPPSRGLSHRASTHRRSNSIYTINHNEANNRSLREKPSNSNVLRPVPSSSTNTRSILRKTYYSAIPTNPSKHGRHKIHHSSHQPESLDWFNVLIAQTIAQYRQTAYLLKDSPTSSILSSLNAALNNPEKKPSFIDKINVTDISLGEEFPIFSNCRIIAVDDPNSDGGRLQALMDVDLSDDNLSIAIETSLLLNYPKPCSAILPVALSVSVVRFSGTLCISLVPASTPPLHTPSPSPSPPTADGNSRGKTTGDANARAADEEADGLPPKTGSPKSNVAFSFLPDYRLDLSVRSLIGSRSRLQDVPKVAQLVEARVHAWFEERVVEPRVQVVGLPDLWPRMGRTGVRTGDDSETGSNAASRSAMSADLGDHHLGDREPEGLRFRGGLASRPQFDSVSRTSSYNVETGDLRSPSLIREESSGALSEQFQMPGSLSGAAAR</sequence>
<name>MMM1_ASPNC</name>
<dbReference type="EMBL" id="AM270334">
    <property type="protein sequence ID" value="CAK42268.1"/>
    <property type="molecule type" value="Genomic_DNA"/>
</dbReference>
<dbReference type="RefSeq" id="XP_001396638.1">
    <property type="nucleotide sequence ID" value="XM_001396601.1"/>
</dbReference>
<dbReference type="SMR" id="A2R4N0"/>
<dbReference type="EnsemblFungi" id="CAK42268">
    <property type="protein sequence ID" value="CAK42268"/>
    <property type="gene ID" value="An15g00980"/>
</dbReference>
<dbReference type="GeneID" id="4987698"/>
<dbReference type="KEGG" id="ang:An15g00980"/>
<dbReference type="VEuPathDB" id="FungiDB:An15g00980"/>
<dbReference type="HOGENOM" id="CLU_032730_1_0_1"/>
<dbReference type="Proteomes" id="UP000006706">
    <property type="component" value="Chromosome 3R"/>
</dbReference>
<dbReference type="GO" id="GO:0005789">
    <property type="term" value="C:endoplasmic reticulum membrane"/>
    <property type="evidence" value="ECO:0007669"/>
    <property type="project" value="UniProtKB-SubCell"/>
</dbReference>
<dbReference type="GO" id="GO:0032865">
    <property type="term" value="C:ERMES complex"/>
    <property type="evidence" value="ECO:0007669"/>
    <property type="project" value="UniProtKB-UniRule"/>
</dbReference>
<dbReference type="GO" id="GO:0008289">
    <property type="term" value="F:lipid binding"/>
    <property type="evidence" value="ECO:0007669"/>
    <property type="project" value="UniProtKB-KW"/>
</dbReference>
<dbReference type="GO" id="GO:0000002">
    <property type="term" value="P:mitochondrial genome maintenance"/>
    <property type="evidence" value="ECO:0007669"/>
    <property type="project" value="UniProtKB-UniRule"/>
</dbReference>
<dbReference type="GO" id="GO:1990456">
    <property type="term" value="P:mitochondrion-endoplasmic reticulum membrane tethering"/>
    <property type="evidence" value="ECO:0007669"/>
    <property type="project" value="TreeGrafter"/>
</dbReference>
<dbReference type="GO" id="GO:0015914">
    <property type="term" value="P:phospholipid transport"/>
    <property type="evidence" value="ECO:0007669"/>
    <property type="project" value="TreeGrafter"/>
</dbReference>
<dbReference type="GO" id="GO:0045040">
    <property type="term" value="P:protein insertion into mitochondrial outer membrane"/>
    <property type="evidence" value="ECO:0007669"/>
    <property type="project" value="UniProtKB-UniRule"/>
</dbReference>
<dbReference type="CDD" id="cd21671">
    <property type="entry name" value="SMP_Mmm1"/>
    <property type="match status" value="1"/>
</dbReference>
<dbReference type="HAMAP" id="MF_03103">
    <property type="entry name" value="Mmm1"/>
    <property type="match status" value="1"/>
</dbReference>
<dbReference type="InterPro" id="IPR027537">
    <property type="entry name" value="Mmm1"/>
</dbReference>
<dbReference type="InterPro" id="IPR019411">
    <property type="entry name" value="MMM1_dom"/>
</dbReference>
<dbReference type="InterPro" id="IPR031468">
    <property type="entry name" value="SMP_LBD"/>
</dbReference>
<dbReference type="PANTHER" id="PTHR13466:SF0">
    <property type="entry name" value="SMP-LTD DOMAIN-CONTAINING PROTEIN"/>
    <property type="match status" value="1"/>
</dbReference>
<dbReference type="PANTHER" id="PTHR13466">
    <property type="entry name" value="TEX2 PROTEIN-RELATED"/>
    <property type="match status" value="1"/>
</dbReference>
<dbReference type="Pfam" id="PF10296">
    <property type="entry name" value="MMM1"/>
    <property type="match status" value="1"/>
</dbReference>
<dbReference type="PROSITE" id="PS51847">
    <property type="entry name" value="SMP"/>
    <property type="match status" value="1"/>
</dbReference>
<protein>
    <recommendedName>
        <fullName evidence="1">Maintenance of mitochondrial morphology protein 1</fullName>
    </recommendedName>
</protein>
<proteinExistence type="inferred from homology"/>
<accession>A2R4N0</accession>
<reference key="1">
    <citation type="journal article" date="2007" name="Nat. Biotechnol.">
        <title>Genome sequencing and analysis of the versatile cell factory Aspergillus niger CBS 513.88.</title>
        <authorList>
            <person name="Pel H.J."/>
            <person name="de Winde J.H."/>
            <person name="Archer D.B."/>
            <person name="Dyer P.S."/>
            <person name="Hofmann G."/>
            <person name="Schaap P.J."/>
            <person name="Turner G."/>
            <person name="de Vries R.P."/>
            <person name="Albang R."/>
            <person name="Albermann K."/>
            <person name="Andersen M.R."/>
            <person name="Bendtsen J.D."/>
            <person name="Benen J.A.E."/>
            <person name="van den Berg M."/>
            <person name="Breestraat S."/>
            <person name="Caddick M.X."/>
            <person name="Contreras R."/>
            <person name="Cornell M."/>
            <person name="Coutinho P.M."/>
            <person name="Danchin E.G.J."/>
            <person name="Debets A.J.M."/>
            <person name="Dekker P."/>
            <person name="van Dijck P.W.M."/>
            <person name="van Dijk A."/>
            <person name="Dijkhuizen L."/>
            <person name="Driessen A.J.M."/>
            <person name="d'Enfert C."/>
            <person name="Geysens S."/>
            <person name="Goosen C."/>
            <person name="Groot G.S.P."/>
            <person name="de Groot P.W.J."/>
            <person name="Guillemette T."/>
            <person name="Henrissat B."/>
            <person name="Herweijer M."/>
            <person name="van den Hombergh J.P.T.W."/>
            <person name="van den Hondel C.A.M.J.J."/>
            <person name="van der Heijden R.T.J.M."/>
            <person name="van der Kaaij R.M."/>
            <person name="Klis F.M."/>
            <person name="Kools H.J."/>
            <person name="Kubicek C.P."/>
            <person name="van Kuyk P.A."/>
            <person name="Lauber J."/>
            <person name="Lu X."/>
            <person name="van der Maarel M.J.E.C."/>
            <person name="Meulenberg R."/>
            <person name="Menke H."/>
            <person name="Mortimer M.A."/>
            <person name="Nielsen J."/>
            <person name="Oliver S.G."/>
            <person name="Olsthoorn M."/>
            <person name="Pal K."/>
            <person name="van Peij N.N.M.E."/>
            <person name="Ram A.F.J."/>
            <person name="Rinas U."/>
            <person name="Roubos J.A."/>
            <person name="Sagt C.M.J."/>
            <person name="Schmoll M."/>
            <person name="Sun J."/>
            <person name="Ussery D."/>
            <person name="Varga J."/>
            <person name="Vervecken W."/>
            <person name="van de Vondervoort P.J.J."/>
            <person name="Wedler H."/>
            <person name="Woesten H.A.B."/>
            <person name="Zeng A.-P."/>
            <person name="van Ooyen A.J.J."/>
            <person name="Visser J."/>
            <person name="Stam H."/>
        </authorList>
    </citation>
    <scope>NUCLEOTIDE SEQUENCE [LARGE SCALE GENOMIC DNA]</scope>
    <source>
        <strain>ATCC MYA-4892 / CBS 513.88 / FGSC A1513</strain>
    </source>
</reference>
<comment type="function">
    <text evidence="1">Component of the ERMES/MDM complex, which serves as a molecular tether to connect the endoplasmic reticulum (ER) and mitochondria. Components of this complex are involved in the control of mitochondrial shape and protein biogenesis, and function in nonvesicular lipid trafficking between the ER and mitochondria. The mdm12-mmm1 subcomplex functions in the major beta-barrel assembly pathway that is responsible for biogenesis of all outer membrane beta-barrel proteins, and acts in a late step after the SAM complex. The mdm10-mdm12-mmm1 subcomplex further acts in the TOM40-specific pathway after the action of the mdm12-mmm1 complex. Essential for establishing and maintaining the structure of mitochondria and maintenance of mtDNA nucleoids.</text>
</comment>
<comment type="subunit">
    <text evidence="1">Homodimer. Component of the ER-mitochondria encounter structure (ERMES) or MDM complex, composed of mmm1, mdm10, mdm12 and mdm34. A mmm1 homodimer associates with one molecule of mdm12 on each side in a pairwise head-to-tail manner, and the SMP-LTD domains of mmm1 and mdm12 generate a continuous hydrophobic tunnel for phospholipid trafficking.</text>
</comment>
<comment type="subcellular location">
    <subcellularLocation>
        <location evidence="1">Endoplasmic reticulum membrane</location>
        <topology evidence="1">Single-pass type I membrane protein</topology>
    </subcellularLocation>
    <text evidence="1">The ERMES/MDM complex localizes to a few discrete foci (around 10 per single cell), that represent mitochondria-endoplasmic reticulum junctions. These foci are often found next to mtDNA nucleoids.</text>
</comment>
<comment type="domain">
    <text evidence="1">The SMP-LTD domain is a barrel-like domain that can bind various types of glycerophospholipids in its interior and mediate their transfer between two adjacent bilayers.</text>
</comment>
<comment type="similarity">
    <text evidence="1">Belongs to the MMM1 family.</text>
</comment>
<gene>
    <name evidence="1" type="primary">mmm11</name>
    <name type="ORF">An15g00980</name>
</gene>
<organism>
    <name type="scientific">Aspergillus niger (strain ATCC MYA-4892 / CBS 513.88 / FGSC A1513)</name>
    <dbReference type="NCBI Taxonomy" id="425011"/>
    <lineage>
        <taxon>Eukaryota</taxon>
        <taxon>Fungi</taxon>
        <taxon>Dikarya</taxon>
        <taxon>Ascomycota</taxon>
        <taxon>Pezizomycotina</taxon>
        <taxon>Eurotiomycetes</taxon>
        <taxon>Eurotiomycetidae</taxon>
        <taxon>Eurotiales</taxon>
        <taxon>Aspergillaceae</taxon>
        <taxon>Aspergillus</taxon>
        <taxon>Aspergillus subgen. Circumdati</taxon>
    </lineage>
</organism>
<keyword id="KW-0256">Endoplasmic reticulum</keyword>
<keyword id="KW-0445">Lipid transport</keyword>
<keyword id="KW-0446">Lipid-binding</keyword>
<keyword id="KW-0472">Membrane</keyword>
<keyword id="KW-1185">Reference proteome</keyword>
<keyword id="KW-0812">Transmembrane</keyword>
<keyword id="KW-1133">Transmembrane helix</keyword>
<keyword id="KW-0813">Transport</keyword>